<organism>
    <name type="scientific">Mesorhizobium japonicum (strain LMG 29417 / CECT 9101 / MAFF 303099)</name>
    <name type="common">Mesorhizobium loti (strain MAFF 303099)</name>
    <dbReference type="NCBI Taxonomy" id="266835"/>
    <lineage>
        <taxon>Bacteria</taxon>
        <taxon>Pseudomonadati</taxon>
        <taxon>Pseudomonadota</taxon>
        <taxon>Alphaproteobacteria</taxon>
        <taxon>Hyphomicrobiales</taxon>
        <taxon>Phyllobacteriaceae</taxon>
        <taxon>Mesorhizobium</taxon>
    </lineage>
</organism>
<proteinExistence type="inferred from homology"/>
<reference key="1">
    <citation type="journal article" date="2000" name="DNA Res.">
        <title>Complete genome structure of the nitrogen-fixing symbiotic bacterium Mesorhizobium loti.</title>
        <authorList>
            <person name="Kaneko T."/>
            <person name="Nakamura Y."/>
            <person name="Sato S."/>
            <person name="Asamizu E."/>
            <person name="Kato T."/>
            <person name="Sasamoto S."/>
            <person name="Watanabe A."/>
            <person name="Idesawa K."/>
            <person name="Ishikawa A."/>
            <person name="Kawashima K."/>
            <person name="Kimura T."/>
            <person name="Kishida Y."/>
            <person name="Kiyokawa C."/>
            <person name="Kohara M."/>
            <person name="Matsumoto M."/>
            <person name="Matsuno A."/>
            <person name="Mochizuki Y."/>
            <person name="Nakayama S."/>
            <person name="Nakazaki N."/>
            <person name="Shimpo S."/>
            <person name="Sugimoto M."/>
            <person name="Takeuchi C."/>
            <person name="Yamada M."/>
            <person name="Tabata S."/>
        </authorList>
    </citation>
    <scope>NUCLEOTIDE SEQUENCE [LARGE SCALE GENOMIC DNA]</scope>
    <source>
        <strain>LMG 29417 / CECT 9101 / MAFF 303099</strain>
    </source>
</reference>
<dbReference type="EC" id="6.5.1.2" evidence="1"/>
<dbReference type="EMBL" id="BA000012">
    <property type="protein sequence ID" value="BAB48890.1"/>
    <property type="molecule type" value="Genomic_DNA"/>
</dbReference>
<dbReference type="RefSeq" id="WP_010910243.1">
    <property type="nucleotide sequence ID" value="NC_002678.2"/>
</dbReference>
<dbReference type="SMR" id="Q98KC4"/>
<dbReference type="KEGG" id="mlo:mll1539"/>
<dbReference type="PATRIC" id="fig|266835.9.peg.1242"/>
<dbReference type="eggNOG" id="COG0272">
    <property type="taxonomic scope" value="Bacteria"/>
</dbReference>
<dbReference type="HOGENOM" id="CLU_007764_2_1_5"/>
<dbReference type="Proteomes" id="UP000000552">
    <property type="component" value="Chromosome"/>
</dbReference>
<dbReference type="GO" id="GO:0005829">
    <property type="term" value="C:cytosol"/>
    <property type="evidence" value="ECO:0007669"/>
    <property type="project" value="TreeGrafter"/>
</dbReference>
<dbReference type="GO" id="GO:0003911">
    <property type="term" value="F:DNA ligase (NAD+) activity"/>
    <property type="evidence" value="ECO:0007669"/>
    <property type="project" value="UniProtKB-UniRule"/>
</dbReference>
<dbReference type="GO" id="GO:0046872">
    <property type="term" value="F:metal ion binding"/>
    <property type="evidence" value="ECO:0007669"/>
    <property type="project" value="UniProtKB-KW"/>
</dbReference>
<dbReference type="GO" id="GO:0006281">
    <property type="term" value="P:DNA repair"/>
    <property type="evidence" value="ECO:0007669"/>
    <property type="project" value="UniProtKB-KW"/>
</dbReference>
<dbReference type="GO" id="GO:0006260">
    <property type="term" value="P:DNA replication"/>
    <property type="evidence" value="ECO:0007669"/>
    <property type="project" value="UniProtKB-KW"/>
</dbReference>
<dbReference type="CDD" id="cd17748">
    <property type="entry name" value="BRCT_DNA_ligase_like"/>
    <property type="match status" value="1"/>
</dbReference>
<dbReference type="CDD" id="cd00114">
    <property type="entry name" value="LIGANc"/>
    <property type="match status" value="1"/>
</dbReference>
<dbReference type="FunFam" id="3.30.470.30:FF:000001">
    <property type="entry name" value="DNA ligase"/>
    <property type="match status" value="1"/>
</dbReference>
<dbReference type="Gene3D" id="6.20.10.30">
    <property type="match status" value="1"/>
</dbReference>
<dbReference type="Gene3D" id="1.10.150.20">
    <property type="entry name" value="5' to 3' exonuclease, C-terminal subdomain"/>
    <property type="match status" value="2"/>
</dbReference>
<dbReference type="Gene3D" id="3.40.50.10190">
    <property type="entry name" value="BRCT domain"/>
    <property type="match status" value="1"/>
</dbReference>
<dbReference type="Gene3D" id="3.30.470.30">
    <property type="entry name" value="DNA ligase/mRNA capping enzyme"/>
    <property type="match status" value="1"/>
</dbReference>
<dbReference type="Gene3D" id="1.10.287.610">
    <property type="entry name" value="Helix hairpin bin"/>
    <property type="match status" value="1"/>
</dbReference>
<dbReference type="Gene3D" id="2.40.50.140">
    <property type="entry name" value="Nucleic acid-binding proteins"/>
    <property type="match status" value="1"/>
</dbReference>
<dbReference type="HAMAP" id="MF_01588">
    <property type="entry name" value="DNA_ligase_A"/>
    <property type="match status" value="1"/>
</dbReference>
<dbReference type="InterPro" id="IPR001357">
    <property type="entry name" value="BRCT_dom"/>
</dbReference>
<dbReference type="InterPro" id="IPR036420">
    <property type="entry name" value="BRCT_dom_sf"/>
</dbReference>
<dbReference type="InterPro" id="IPR041663">
    <property type="entry name" value="DisA/LigA_HHH"/>
</dbReference>
<dbReference type="InterPro" id="IPR001679">
    <property type="entry name" value="DNA_ligase"/>
</dbReference>
<dbReference type="InterPro" id="IPR018239">
    <property type="entry name" value="DNA_ligase_AS"/>
</dbReference>
<dbReference type="InterPro" id="IPR013839">
    <property type="entry name" value="DNAligase_adenylation"/>
</dbReference>
<dbReference type="InterPro" id="IPR013840">
    <property type="entry name" value="DNAligase_N"/>
</dbReference>
<dbReference type="InterPro" id="IPR012340">
    <property type="entry name" value="NA-bd_OB-fold"/>
</dbReference>
<dbReference type="InterPro" id="IPR004150">
    <property type="entry name" value="NAD_DNA_ligase_OB"/>
</dbReference>
<dbReference type="InterPro" id="IPR010994">
    <property type="entry name" value="RuvA_2-like"/>
</dbReference>
<dbReference type="NCBIfam" id="TIGR00575">
    <property type="entry name" value="dnlj"/>
    <property type="match status" value="1"/>
</dbReference>
<dbReference type="NCBIfam" id="NF005932">
    <property type="entry name" value="PRK07956.1"/>
    <property type="match status" value="1"/>
</dbReference>
<dbReference type="PANTHER" id="PTHR23389">
    <property type="entry name" value="CHROMOSOME TRANSMISSION FIDELITY FACTOR 18"/>
    <property type="match status" value="1"/>
</dbReference>
<dbReference type="PANTHER" id="PTHR23389:SF9">
    <property type="entry name" value="DNA LIGASE"/>
    <property type="match status" value="1"/>
</dbReference>
<dbReference type="Pfam" id="PF00533">
    <property type="entry name" value="BRCT"/>
    <property type="match status" value="1"/>
</dbReference>
<dbReference type="Pfam" id="PF01653">
    <property type="entry name" value="DNA_ligase_aden"/>
    <property type="match status" value="1"/>
</dbReference>
<dbReference type="Pfam" id="PF03120">
    <property type="entry name" value="DNA_ligase_OB"/>
    <property type="match status" value="1"/>
</dbReference>
<dbReference type="Pfam" id="PF12826">
    <property type="entry name" value="HHH_2"/>
    <property type="match status" value="1"/>
</dbReference>
<dbReference type="PIRSF" id="PIRSF001604">
    <property type="entry name" value="LigA"/>
    <property type="match status" value="1"/>
</dbReference>
<dbReference type="SMART" id="SM00292">
    <property type="entry name" value="BRCT"/>
    <property type="match status" value="1"/>
</dbReference>
<dbReference type="SMART" id="SM00532">
    <property type="entry name" value="LIGANc"/>
    <property type="match status" value="1"/>
</dbReference>
<dbReference type="SUPFAM" id="SSF52113">
    <property type="entry name" value="BRCT domain"/>
    <property type="match status" value="1"/>
</dbReference>
<dbReference type="SUPFAM" id="SSF56091">
    <property type="entry name" value="DNA ligase/mRNA capping enzyme, catalytic domain"/>
    <property type="match status" value="1"/>
</dbReference>
<dbReference type="SUPFAM" id="SSF50249">
    <property type="entry name" value="Nucleic acid-binding proteins"/>
    <property type="match status" value="1"/>
</dbReference>
<dbReference type="SUPFAM" id="SSF47781">
    <property type="entry name" value="RuvA domain 2-like"/>
    <property type="match status" value="1"/>
</dbReference>
<dbReference type="PROSITE" id="PS50172">
    <property type="entry name" value="BRCT"/>
    <property type="match status" value="1"/>
</dbReference>
<dbReference type="PROSITE" id="PS01055">
    <property type="entry name" value="DNA_LIGASE_N1"/>
    <property type="match status" value="1"/>
</dbReference>
<protein>
    <recommendedName>
        <fullName evidence="1">DNA ligase</fullName>
        <ecNumber evidence="1">6.5.1.2</ecNumber>
    </recommendedName>
    <alternativeName>
        <fullName evidence="1">Polydeoxyribonucleotide synthase [NAD(+)]</fullName>
    </alternativeName>
</protein>
<evidence type="ECO:0000255" key="1">
    <source>
        <dbReference type="HAMAP-Rule" id="MF_01588"/>
    </source>
</evidence>
<name>DNLJ_RHILO</name>
<sequence>MAEKPVDSLSESEAEAELKRLAEEIAGHDRRYHAEDAPTITDAEYDALRRRNLAIEERFPGLVREDSPSRRVGAPPAEGFAKVRHAVPMLSLAKAYTDEDVTDFIERGRRFFDRDKDLDIAFTAEPKIDGLSASLRYENGVFVQGATRGDGAVGEDITANLRTIADIPAKLKGSGWPDVIEIRGEVYMTYAEFEALKARSAAAGGQDYVNPRNTAAGSLRQKDASVTASRNLKFFAYAWGFTTADPAPTQYESVQKFADWGFKISPLMVRAKSVEELVAQYHLIEEQRSSLGYDIDGVVYKVDQLELQRRWGFVTGEPRWAVAHKFPAEQAMTTVQKIDIQVGRTGTLAPVARLAPVTVGGVVVENVTLHNEDYIKGFDSNGLPIRDGIDVRIGDTVVIQRAGDVIPQIVSVVIDKRPADAVPYEFPHTCPVCGSPATREINEKTGKEDSRRRCTGELICAAQAVERLRHFVSRGALDIEGLGAENIDTFFNAGLIKTAADIFTLRDRRPAVTKALAERREEQARQREAASGKTRKNVRSVEDRNYEGLDKLFAAIDSRREPELDRFIFALGIRHIGETTAAVLAKTFSTIEELIRVGKETAAAEDPHTVFPSVNGIGDTVIDALCDFFGNERNDDVLDKLLEQVKPKPYIVTVSADSEVAGKTIVFTGTLEKMTRSEAKAMAERLGAKVAGSVSAKTDLLVAGPGAGSKLKLASELGVEVIDEDTWLQRVGKA</sequence>
<comment type="function">
    <text evidence="1">DNA ligase that catalyzes the formation of phosphodiester linkages between 5'-phosphoryl and 3'-hydroxyl groups in double-stranded DNA using NAD as a coenzyme and as the energy source for the reaction. It is essential for DNA replication and repair of damaged DNA.</text>
</comment>
<comment type="catalytic activity">
    <reaction evidence="1">
        <text>NAD(+) + (deoxyribonucleotide)n-3'-hydroxyl + 5'-phospho-(deoxyribonucleotide)m = (deoxyribonucleotide)n+m + AMP + beta-nicotinamide D-nucleotide.</text>
        <dbReference type="EC" id="6.5.1.2"/>
    </reaction>
</comment>
<comment type="cofactor">
    <cofactor evidence="1">
        <name>Mg(2+)</name>
        <dbReference type="ChEBI" id="CHEBI:18420"/>
    </cofactor>
    <cofactor evidence="1">
        <name>Mn(2+)</name>
        <dbReference type="ChEBI" id="CHEBI:29035"/>
    </cofactor>
</comment>
<comment type="similarity">
    <text evidence="1">Belongs to the NAD-dependent DNA ligase family. LigA subfamily.</text>
</comment>
<feature type="chain" id="PRO_0000313392" description="DNA ligase">
    <location>
        <begin position="1"/>
        <end position="734"/>
    </location>
</feature>
<feature type="domain" description="BRCT" evidence="1">
    <location>
        <begin position="655"/>
        <end position="734"/>
    </location>
</feature>
<feature type="active site" description="N6-AMP-lysine intermediate" evidence="1">
    <location>
        <position position="127"/>
    </location>
</feature>
<feature type="binding site" evidence="1">
    <location>
        <begin position="42"/>
        <end position="46"/>
    </location>
    <ligand>
        <name>NAD(+)</name>
        <dbReference type="ChEBI" id="CHEBI:57540"/>
    </ligand>
</feature>
<feature type="binding site" evidence="1">
    <location>
        <begin position="91"/>
        <end position="92"/>
    </location>
    <ligand>
        <name>NAD(+)</name>
        <dbReference type="ChEBI" id="CHEBI:57540"/>
    </ligand>
</feature>
<feature type="binding site" evidence="1">
    <location>
        <position position="125"/>
    </location>
    <ligand>
        <name>NAD(+)</name>
        <dbReference type="ChEBI" id="CHEBI:57540"/>
    </ligand>
</feature>
<feature type="binding site" evidence="1">
    <location>
        <position position="148"/>
    </location>
    <ligand>
        <name>NAD(+)</name>
        <dbReference type="ChEBI" id="CHEBI:57540"/>
    </ligand>
</feature>
<feature type="binding site" evidence="1">
    <location>
        <position position="185"/>
    </location>
    <ligand>
        <name>NAD(+)</name>
        <dbReference type="ChEBI" id="CHEBI:57540"/>
    </ligand>
</feature>
<feature type="binding site" evidence="1">
    <location>
        <position position="301"/>
    </location>
    <ligand>
        <name>NAD(+)</name>
        <dbReference type="ChEBI" id="CHEBI:57540"/>
    </ligand>
</feature>
<feature type="binding site" evidence="1">
    <location>
        <position position="325"/>
    </location>
    <ligand>
        <name>NAD(+)</name>
        <dbReference type="ChEBI" id="CHEBI:57540"/>
    </ligand>
</feature>
<feature type="binding site" evidence="1">
    <location>
        <position position="430"/>
    </location>
    <ligand>
        <name>Zn(2+)</name>
        <dbReference type="ChEBI" id="CHEBI:29105"/>
    </ligand>
</feature>
<feature type="binding site" evidence="1">
    <location>
        <position position="433"/>
    </location>
    <ligand>
        <name>Zn(2+)</name>
        <dbReference type="ChEBI" id="CHEBI:29105"/>
    </ligand>
</feature>
<feature type="binding site" evidence="1">
    <location>
        <position position="454"/>
    </location>
    <ligand>
        <name>Zn(2+)</name>
        <dbReference type="ChEBI" id="CHEBI:29105"/>
    </ligand>
</feature>
<feature type="binding site" evidence="1">
    <location>
        <position position="460"/>
    </location>
    <ligand>
        <name>Zn(2+)</name>
        <dbReference type="ChEBI" id="CHEBI:29105"/>
    </ligand>
</feature>
<keyword id="KW-0227">DNA damage</keyword>
<keyword id="KW-0234">DNA repair</keyword>
<keyword id="KW-0235">DNA replication</keyword>
<keyword id="KW-0436">Ligase</keyword>
<keyword id="KW-0460">Magnesium</keyword>
<keyword id="KW-0464">Manganese</keyword>
<keyword id="KW-0479">Metal-binding</keyword>
<keyword id="KW-0520">NAD</keyword>
<keyword id="KW-0862">Zinc</keyword>
<accession>Q98KC4</accession>
<gene>
    <name evidence="1" type="primary">ligA</name>
    <name type="ordered locus">mll1539</name>
</gene>